<organism>
    <name type="scientific">Phaeosphaeria nodorum (strain SN15 / ATCC MYA-4574 / FGSC 10173)</name>
    <name type="common">Glume blotch fungus</name>
    <name type="synonym">Parastagonospora nodorum</name>
    <dbReference type="NCBI Taxonomy" id="321614"/>
    <lineage>
        <taxon>Eukaryota</taxon>
        <taxon>Fungi</taxon>
        <taxon>Dikarya</taxon>
        <taxon>Ascomycota</taxon>
        <taxon>Pezizomycotina</taxon>
        <taxon>Dothideomycetes</taxon>
        <taxon>Pleosporomycetidae</taxon>
        <taxon>Pleosporales</taxon>
        <taxon>Pleosporineae</taxon>
        <taxon>Phaeosphaeriaceae</taxon>
        <taxon>Parastagonospora</taxon>
    </lineage>
</organism>
<dbReference type="EMBL" id="CH445330">
    <property type="protein sequence ID" value="EAT88110.2"/>
    <property type="status" value="ALT_SEQ"/>
    <property type="molecule type" value="Genomic_DNA"/>
</dbReference>
<dbReference type="SMR" id="P0C7N6"/>
<dbReference type="FunCoup" id="P0C7N6">
    <property type="interactions" value="895"/>
</dbReference>
<dbReference type="STRING" id="321614.P0C7N6"/>
<dbReference type="VEuPathDB" id="FungiDB:JI435_043500"/>
<dbReference type="eggNOG" id="KOG0989">
    <property type="taxonomic scope" value="Eukaryota"/>
</dbReference>
<dbReference type="eggNOG" id="KOG2834">
    <property type="taxonomic scope" value="Eukaryota"/>
</dbReference>
<dbReference type="InParanoid" id="P0C7N6"/>
<dbReference type="OMA" id="KWSRTGR"/>
<dbReference type="OrthoDB" id="10251089at2759"/>
<dbReference type="Proteomes" id="UP000001055">
    <property type="component" value="Unassembled WGS sequence"/>
</dbReference>
<dbReference type="GO" id="GO:0005789">
    <property type="term" value="C:endoplasmic reticulum membrane"/>
    <property type="evidence" value="ECO:0007669"/>
    <property type="project" value="UniProtKB-SubCell"/>
</dbReference>
<dbReference type="GO" id="GO:0031965">
    <property type="term" value="C:nuclear membrane"/>
    <property type="evidence" value="ECO:0007669"/>
    <property type="project" value="UniProtKB-SubCell"/>
</dbReference>
<dbReference type="GO" id="GO:0005634">
    <property type="term" value="C:nucleus"/>
    <property type="evidence" value="ECO:0000318"/>
    <property type="project" value="GO_Central"/>
</dbReference>
<dbReference type="GO" id="GO:0048471">
    <property type="term" value="C:perinuclear region of cytoplasm"/>
    <property type="evidence" value="ECO:0007669"/>
    <property type="project" value="UniProtKB-SubCell"/>
</dbReference>
<dbReference type="GO" id="GO:0043130">
    <property type="term" value="F:ubiquitin binding"/>
    <property type="evidence" value="ECO:0000318"/>
    <property type="project" value="GO_Central"/>
</dbReference>
<dbReference type="GO" id="GO:0031625">
    <property type="term" value="F:ubiquitin protein ligase binding"/>
    <property type="evidence" value="ECO:0000318"/>
    <property type="project" value="GO_Central"/>
</dbReference>
<dbReference type="GO" id="GO:0051028">
    <property type="term" value="P:mRNA transport"/>
    <property type="evidence" value="ECO:0007669"/>
    <property type="project" value="UniProtKB-KW"/>
</dbReference>
<dbReference type="GO" id="GO:0015031">
    <property type="term" value="P:protein transport"/>
    <property type="evidence" value="ECO:0007669"/>
    <property type="project" value="UniProtKB-KW"/>
</dbReference>
<dbReference type="GO" id="GO:0006511">
    <property type="term" value="P:ubiquitin-dependent protein catabolic process"/>
    <property type="evidence" value="ECO:0000318"/>
    <property type="project" value="GO_Central"/>
</dbReference>
<dbReference type="CDD" id="cd08061">
    <property type="entry name" value="MPN_NPL4"/>
    <property type="match status" value="1"/>
</dbReference>
<dbReference type="Gene3D" id="3.10.20.90">
    <property type="entry name" value="Phosphatidylinositol 3-kinase Catalytic Subunit, Chain A, domain 1"/>
    <property type="match status" value="1"/>
</dbReference>
<dbReference type="InterPro" id="IPR037518">
    <property type="entry name" value="MPN"/>
</dbReference>
<dbReference type="InterPro" id="IPR016563">
    <property type="entry name" value="Npl4"/>
</dbReference>
<dbReference type="InterPro" id="IPR007717">
    <property type="entry name" value="NPL4_C"/>
</dbReference>
<dbReference type="InterPro" id="IPR007716">
    <property type="entry name" value="NPL4_Zn-bd_put"/>
</dbReference>
<dbReference type="InterPro" id="IPR029071">
    <property type="entry name" value="Ubiquitin-like_domsf"/>
</dbReference>
<dbReference type="PANTHER" id="PTHR12710">
    <property type="entry name" value="NUCLEAR PROTEIN LOCALIZATION 4"/>
    <property type="match status" value="1"/>
</dbReference>
<dbReference type="PANTHER" id="PTHR12710:SF0">
    <property type="entry name" value="NUCLEAR PROTEIN LOCALIZATION PROTEIN 4 HOMOLOG"/>
    <property type="match status" value="1"/>
</dbReference>
<dbReference type="Pfam" id="PF05021">
    <property type="entry name" value="NPL4"/>
    <property type="match status" value="1"/>
</dbReference>
<dbReference type="Pfam" id="PF05020">
    <property type="entry name" value="zf-NPL4"/>
    <property type="match status" value="1"/>
</dbReference>
<dbReference type="PIRSF" id="PIRSF010052">
    <property type="entry name" value="Polyub_prc_Npl4"/>
    <property type="match status" value="1"/>
</dbReference>
<dbReference type="SUPFAM" id="SSF54236">
    <property type="entry name" value="Ubiquitin-like"/>
    <property type="match status" value="1"/>
</dbReference>
<dbReference type="PROSITE" id="PS50249">
    <property type="entry name" value="MPN"/>
    <property type="match status" value="1"/>
</dbReference>
<sequence>MILRFVSKEGQFRLTVQPDSTFPELLAQIAEKLPKSVDLQSVTVSNRPQGGDARKISELKGVSFKQVGLSHGAQLFLGFEDQSTASNGHATAPTGANRLNGKVVEASDMPSVPLGSPTQVIKNPWEVVRQSPLDDKLDRQDGKIHRKRDARMCTHGPKGMCDYCMPLEPYAAAYLAEKKIKHLSFHSYLRKVNSAKNRPELGSSYIPPLTEPYYRVRPDCPSGHKPFPAGICTKCQPGAISLKPQEYRMVDHVEFASIQVVDDLINFWRNTGCQRLGFLYGRYEEYTEVPLGTKAVVETIYEPPQVNELDGISLGDWDNEKEIDEIAAQCGLQRVGVIFTDLLDADKGDGSVICKRHIDSYYLSSLEIAFAARYQAKYPRPTKWSETGKFGSNFVTCVISGDDQGQIGISSYQASNDAVEMVRADIIEPSAEPSVMLVQSEDDNEALNRARYIPEVFYRRINEHGANVQENAKPDFPVEYLFVTLTHGFPTQPNPLFTGGKFPIENREIMGEMPDVSALGKSLNAKANGLALNTTSGLNAISNFHMLCFIHNLGILSKDEESLLFKVASTHDTSEGSALQHTGGWATLLTILKESGERPPKRSYASPSFSATGRGAAHPGEKNRLMRQPSHGSDSDSVQLAKRLKGASLKGKE</sequence>
<accession>P0C7N6</accession>
<accession>Q0UV64</accession>
<reference key="1">
    <citation type="journal article" date="2007" name="Plant Cell">
        <title>Dothideomycete-plant interactions illuminated by genome sequencing and EST analysis of the wheat pathogen Stagonospora nodorum.</title>
        <authorList>
            <person name="Hane J.K."/>
            <person name="Lowe R.G.T."/>
            <person name="Solomon P.S."/>
            <person name="Tan K.-C."/>
            <person name="Schoch C.L."/>
            <person name="Spatafora J.W."/>
            <person name="Crous P.W."/>
            <person name="Kodira C.D."/>
            <person name="Birren B.W."/>
            <person name="Galagan J.E."/>
            <person name="Torriani S.F.F."/>
            <person name="McDonald B.A."/>
            <person name="Oliver R.P."/>
        </authorList>
    </citation>
    <scope>NUCLEOTIDE SEQUENCE [LARGE SCALE GENOMIC DNA]</scope>
    <source>
        <strain>SN15 / ATCC MYA-4574 / FGSC 10173</strain>
    </source>
</reference>
<comment type="function">
    <text evidence="1">Involved in the import of nuclear-targeted proteins into the nucleus and the export of poly(A) RNA out of the nucleus. Has a role in the endoplasmic reticulum-associated degradation (ERAD) pathway (By similarity).</text>
</comment>
<comment type="subcellular location">
    <subcellularLocation>
        <location evidence="1">Cytoplasm</location>
        <location evidence="1">Perinuclear region</location>
    </subcellularLocation>
    <subcellularLocation>
        <location evidence="1">Endoplasmic reticulum membrane</location>
        <topology evidence="1">Peripheral membrane protein</topology>
        <orientation evidence="1">Cytoplasmic side</orientation>
    </subcellularLocation>
    <subcellularLocation>
        <location evidence="1">Nucleus membrane</location>
        <topology evidence="1">Peripheral membrane protein</topology>
        <orientation evidence="1">Cytoplasmic side</orientation>
    </subcellularLocation>
    <text evidence="1">Localizes mainly at the nuclear periphery and the endoplasmic reticulum membrane.</text>
</comment>
<comment type="similarity">
    <text evidence="4">Belongs to the NPL4 family.</text>
</comment>
<comment type="sequence caution" evidence="4">
    <conflict type="erroneous gene model prediction">
        <sequence resource="EMBL-CDS" id="EAT88110"/>
    </conflict>
</comment>
<proteinExistence type="inferred from homology"/>
<evidence type="ECO:0000250" key="1"/>
<evidence type="ECO:0000255" key="2">
    <source>
        <dbReference type="PROSITE-ProRule" id="PRU01182"/>
    </source>
</evidence>
<evidence type="ECO:0000256" key="3">
    <source>
        <dbReference type="SAM" id="MobiDB-lite"/>
    </source>
</evidence>
<evidence type="ECO:0000305" key="4"/>
<gene>
    <name type="primary">NPL4</name>
    <name type="ORF">SNOG_04349</name>
</gene>
<feature type="chain" id="PRO_0000339453" description="Nuclear protein localization protein 4">
    <location>
        <begin position="1"/>
        <end position="653"/>
    </location>
</feature>
<feature type="domain" description="MPN" evidence="2">
    <location>
        <begin position="253"/>
        <end position="390"/>
    </location>
</feature>
<feature type="region of interest" description="Disordered" evidence="3">
    <location>
        <begin position="596"/>
        <end position="653"/>
    </location>
</feature>
<protein>
    <recommendedName>
        <fullName>Nuclear protein localization protein 4</fullName>
    </recommendedName>
</protein>
<name>NPL4_PHANO</name>
<keyword id="KW-0963">Cytoplasm</keyword>
<keyword id="KW-0256">Endoplasmic reticulum</keyword>
<keyword id="KW-0472">Membrane</keyword>
<keyword id="KW-0509">mRNA transport</keyword>
<keyword id="KW-0539">Nucleus</keyword>
<keyword id="KW-0653">Protein transport</keyword>
<keyword id="KW-0811">Translocation</keyword>
<keyword id="KW-0813">Transport</keyword>